<protein>
    <recommendedName>
        <fullName>Protein RPN4</fullName>
    </recommendedName>
    <alternativeName>
        <fullName>Nuclear protein SON1</fullName>
    </alternativeName>
    <alternativeName>
        <fullName>Ubiquitin fusion degradation protein 5</fullName>
    </alternativeName>
</protein>
<comment type="function">
    <text evidence="3 4">Acts as a transcriptional activator of a number of genes encoding proteasomal subunits. Binds to a PACE (proteasome-associated control element) DNA sequence 5'-GGTGGCAAA-3'. Its expression is in turn regulated by the 26S proteasome, thereby providing a negative feedback control mechanism. Required for normal growth at low temperatures.</text>
</comment>
<comment type="subunit">
    <text evidence="5 6">Probably interacts with SEC63. Interacts with MUB1, UBR2 and RPN2.</text>
</comment>
<comment type="interaction">
    <interactant intactId="EBI-15931">
        <id>Q03465</id>
    </interactant>
    <interactant intactId="EBI-28207">
        <id>Q03162</id>
        <label>MUB1</label>
    </interactant>
    <organismsDiffer>false</organismsDiffer>
    <experiments>3</experiments>
</comment>
<comment type="interaction">
    <interactant intactId="EBI-15931">
        <id>Q03465</id>
    </interactant>
    <interactant intactId="EBI-34338">
        <id>Q07963</id>
        <label>UBR2</label>
    </interactant>
    <organismsDiffer>false</organismsDiffer>
    <experiments>2</experiments>
</comment>
<comment type="subcellular location">
    <subcellularLocation>
        <location>Nucleus</location>
    </subcellularLocation>
</comment>
<comment type="PTM">
    <text evidence="5 6">Ubiquitinated by UBR2 in the presence of UBC2; which leads to proteasomal degradation.</text>
</comment>
<comment type="disruption phenotype">
    <text evidence="7">Mutants grow slowly at low temperatures and show partial mislocalization of nuclear antigens.</text>
</comment>
<comment type="caution">
    <text evidence="8">According to PubMed:9512348, it is a component of the 26S proteasome.</text>
</comment>
<sequence length="531" mass="60153">MASTELSLKRTLTDILEDELYHTNPGHSQFTSHYQNYHPNASITPYKLVNKNKENNTFTWNHSLQHQNESSAASIPPQQTYHFPIFNKYADPTLTTTTSFTTSEATANDRQINNVHLIPNEIKGASETPLQKTVNLKNIMKVSDPYVPTRNTFNYDVKISNDFFDNGDNLYGNDEEVLFYEDNYNPKMQWSLQDNSAAINNEDARAIFNNEFDSDDDDISDDEEDEIEENCLQQEQHQEEPLLSLDVTPISMFGSDQKTGRAKSSSHLFNEYSYVDSNMDSISSVVSEDLLDERGHEKIEDEDEDNDLDEDDIYDISLLKNRRKQSFVLNKNTIDFERFPSPSTSANVPSTATTGKRKPAKSSSNRSCVSNSNENGTLERIKKPTSAVVSSNASRRKLINYTKKHLSSHSSTNSNSKPSTASPSAHTSSSDGNNEIFTCQIMNLITNEPCGAQFSRSYDLTRHQNTIHAKRKIVFRCSECIKILGSEGYQKTFSRLDALTRHIKSKHEDLSLEQRQEVTKFAKANIGYVMG</sequence>
<name>RPN4_YEAST</name>
<proteinExistence type="evidence at protein level"/>
<accession>Q03465</accession>
<accession>D6VRX0</accession>
<accession>E9P944</accession>
<feature type="chain" id="PRO_0000173871" description="Protein RPN4">
    <location>
        <begin position="1"/>
        <end position="531"/>
    </location>
</feature>
<feature type="region of interest" description="Disordered" evidence="2">
    <location>
        <begin position="338"/>
        <end position="432"/>
    </location>
</feature>
<feature type="short sequence motif" description="Nuclear localization signal" evidence="1">
    <location>
        <begin position="382"/>
        <end position="398"/>
    </location>
</feature>
<feature type="compositionally biased region" description="Polar residues" evidence="2">
    <location>
        <begin position="341"/>
        <end position="354"/>
    </location>
</feature>
<feature type="compositionally biased region" description="Low complexity" evidence="2">
    <location>
        <begin position="362"/>
        <end position="375"/>
    </location>
</feature>
<feature type="compositionally biased region" description="Basic residues" evidence="2">
    <location>
        <begin position="394"/>
        <end position="407"/>
    </location>
</feature>
<feature type="compositionally biased region" description="Low complexity" evidence="2">
    <location>
        <begin position="408"/>
        <end position="430"/>
    </location>
</feature>
<feature type="sequence conflict" description="In Ref. 4; AAU09680." evidence="8" ref="4">
    <original>C</original>
    <variation>Y</variation>
    <location>
        <position position="231"/>
    </location>
</feature>
<organism>
    <name type="scientific">Saccharomyces cerevisiae (strain ATCC 204508 / S288c)</name>
    <name type="common">Baker's yeast</name>
    <dbReference type="NCBI Taxonomy" id="559292"/>
    <lineage>
        <taxon>Eukaryota</taxon>
        <taxon>Fungi</taxon>
        <taxon>Dikarya</taxon>
        <taxon>Ascomycota</taxon>
        <taxon>Saccharomycotina</taxon>
        <taxon>Saccharomycetes</taxon>
        <taxon>Saccharomycetales</taxon>
        <taxon>Saccharomycetaceae</taxon>
        <taxon>Saccharomyces</taxon>
    </lineage>
</organism>
<keyword id="KW-0010">Activator</keyword>
<keyword id="KW-0238">DNA-binding</keyword>
<keyword id="KW-0539">Nucleus</keyword>
<keyword id="KW-1185">Reference proteome</keyword>
<keyword id="KW-0804">Transcription</keyword>
<keyword id="KW-0805">Transcription regulation</keyword>
<keyword id="KW-0832">Ubl conjugation</keyword>
<reference key="1">
    <citation type="journal article" date="1993" name="Genetics">
        <title>Extragenic suppressors of mutations in the cytoplasmic C-terminus of SEC63 define five genes in Saccharomyces cerevisiae.</title>
        <authorList>
            <person name="Nelson M.K."/>
            <person name="Kurihara T."/>
            <person name="Silver P.A."/>
        </authorList>
    </citation>
    <scope>NUCLEOTIDE SEQUENCE [GENOMIC DNA]</scope>
    <scope>DISRUPTION PHENOTYPE</scope>
    <source>
        <strain>ATCC 200060 / W303</strain>
    </source>
</reference>
<reference key="2">
    <citation type="journal article" date="1997" name="Nature">
        <title>The nucleotide sequence of Saccharomyces cerevisiae chromosome IV.</title>
        <authorList>
            <person name="Jacq C."/>
            <person name="Alt-Moerbe J."/>
            <person name="Andre B."/>
            <person name="Arnold W."/>
            <person name="Bahr A."/>
            <person name="Ballesta J.P.G."/>
            <person name="Bargues M."/>
            <person name="Baron L."/>
            <person name="Becker A."/>
            <person name="Biteau N."/>
            <person name="Bloecker H."/>
            <person name="Blugeon C."/>
            <person name="Boskovic J."/>
            <person name="Brandt P."/>
            <person name="Brueckner M."/>
            <person name="Buitrago M.J."/>
            <person name="Coster F."/>
            <person name="Delaveau T."/>
            <person name="del Rey F."/>
            <person name="Dujon B."/>
            <person name="Eide L.G."/>
            <person name="Garcia-Cantalejo J.M."/>
            <person name="Goffeau A."/>
            <person name="Gomez-Peris A."/>
            <person name="Granotier C."/>
            <person name="Hanemann V."/>
            <person name="Hankeln T."/>
            <person name="Hoheisel J.D."/>
            <person name="Jaeger W."/>
            <person name="Jimenez A."/>
            <person name="Jonniaux J.-L."/>
            <person name="Kraemer C."/>
            <person name="Kuester H."/>
            <person name="Laamanen P."/>
            <person name="Legros Y."/>
            <person name="Louis E.J."/>
            <person name="Moeller-Rieker S."/>
            <person name="Monnet A."/>
            <person name="Moro M."/>
            <person name="Mueller-Auer S."/>
            <person name="Nussbaumer B."/>
            <person name="Paricio N."/>
            <person name="Paulin L."/>
            <person name="Perea J."/>
            <person name="Perez-Alonso M."/>
            <person name="Perez-Ortin J.E."/>
            <person name="Pohl T.M."/>
            <person name="Prydz H."/>
            <person name="Purnelle B."/>
            <person name="Rasmussen S.W."/>
            <person name="Remacha M.A."/>
            <person name="Revuelta J.L."/>
            <person name="Rieger M."/>
            <person name="Salom D."/>
            <person name="Saluz H.P."/>
            <person name="Saiz J.E."/>
            <person name="Saren A.-M."/>
            <person name="Schaefer M."/>
            <person name="Scharfe M."/>
            <person name="Schmidt E.R."/>
            <person name="Schneider C."/>
            <person name="Scholler P."/>
            <person name="Schwarz S."/>
            <person name="Soler-Mira A."/>
            <person name="Urrestarazu L.A."/>
            <person name="Verhasselt P."/>
            <person name="Vissers S."/>
            <person name="Voet M."/>
            <person name="Volckaert G."/>
            <person name="Wagner G."/>
            <person name="Wambutt R."/>
            <person name="Wedler E."/>
            <person name="Wedler H."/>
            <person name="Woelfl S."/>
            <person name="Harris D.E."/>
            <person name="Bowman S."/>
            <person name="Brown D."/>
            <person name="Churcher C.M."/>
            <person name="Connor R."/>
            <person name="Dedman K."/>
            <person name="Gentles S."/>
            <person name="Hamlin N."/>
            <person name="Hunt S."/>
            <person name="Jones L."/>
            <person name="McDonald S."/>
            <person name="Murphy L.D."/>
            <person name="Niblett D."/>
            <person name="Odell C."/>
            <person name="Oliver K."/>
            <person name="Rajandream M.A."/>
            <person name="Richards C."/>
            <person name="Shore L."/>
            <person name="Walsh S.V."/>
            <person name="Barrell B.G."/>
            <person name="Dietrich F.S."/>
            <person name="Mulligan J.T."/>
            <person name="Allen E."/>
            <person name="Araujo R."/>
            <person name="Aviles E."/>
            <person name="Berno A."/>
            <person name="Carpenter J."/>
            <person name="Chen E."/>
            <person name="Cherry J.M."/>
            <person name="Chung E."/>
            <person name="Duncan M."/>
            <person name="Hunicke-Smith S."/>
            <person name="Hyman R.W."/>
            <person name="Komp C."/>
            <person name="Lashkari D."/>
            <person name="Lew H."/>
            <person name="Lin D."/>
            <person name="Mosedale D."/>
            <person name="Nakahara K."/>
            <person name="Namath A."/>
            <person name="Oefner P."/>
            <person name="Oh C."/>
            <person name="Petel F.X."/>
            <person name="Roberts D."/>
            <person name="Schramm S."/>
            <person name="Schroeder M."/>
            <person name="Shogren T."/>
            <person name="Shroff N."/>
            <person name="Winant A."/>
            <person name="Yelton M.A."/>
            <person name="Botstein D."/>
            <person name="Davis R.W."/>
            <person name="Johnston M."/>
            <person name="Andrews S."/>
            <person name="Brinkman R."/>
            <person name="Cooper J."/>
            <person name="Ding H."/>
            <person name="Du Z."/>
            <person name="Favello A."/>
            <person name="Fulton L."/>
            <person name="Gattung S."/>
            <person name="Greco T."/>
            <person name="Hallsworth K."/>
            <person name="Hawkins J."/>
            <person name="Hillier L.W."/>
            <person name="Jier M."/>
            <person name="Johnson D."/>
            <person name="Johnston L."/>
            <person name="Kirsten J."/>
            <person name="Kucaba T."/>
            <person name="Langston Y."/>
            <person name="Latreille P."/>
            <person name="Le T."/>
            <person name="Mardis E."/>
            <person name="Menezes S."/>
            <person name="Miller N."/>
            <person name="Nhan M."/>
            <person name="Pauley A."/>
            <person name="Peluso D."/>
            <person name="Rifkin L."/>
            <person name="Riles L."/>
            <person name="Taich A."/>
            <person name="Trevaskis E."/>
            <person name="Vignati D."/>
            <person name="Wilcox L."/>
            <person name="Wohldman P."/>
            <person name="Vaudin M."/>
            <person name="Wilson R."/>
            <person name="Waterston R."/>
            <person name="Albermann K."/>
            <person name="Hani J."/>
            <person name="Heumann K."/>
            <person name="Kleine K."/>
            <person name="Mewes H.-W."/>
            <person name="Zollner A."/>
            <person name="Zaccaria P."/>
        </authorList>
    </citation>
    <scope>NUCLEOTIDE SEQUENCE [LARGE SCALE GENOMIC DNA]</scope>
    <source>
        <strain>ATCC 204508 / S288c</strain>
    </source>
</reference>
<reference key="3">
    <citation type="journal article" date="2014" name="G3 (Bethesda)">
        <title>The reference genome sequence of Saccharomyces cerevisiae: Then and now.</title>
        <authorList>
            <person name="Engel S.R."/>
            <person name="Dietrich F.S."/>
            <person name="Fisk D.G."/>
            <person name="Binkley G."/>
            <person name="Balakrishnan R."/>
            <person name="Costanzo M.C."/>
            <person name="Dwight S.S."/>
            <person name="Hitz B.C."/>
            <person name="Karra K."/>
            <person name="Nash R.S."/>
            <person name="Weng S."/>
            <person name="Wong E.D."/>
            <person name="Lloyd P."/>
            <person name="Skrzypek M.S."/>
            <person name="Miyasato S.R."/>
            <person name="Simison M."/>
            <person name="Cherry J.M."/>
        </authorList>
    </citation>
    <scope>GENOME REANNOTATION</scope>
    <source>
        <strain>ATCC 204508 / S288c</strain>
    </source>
</reference>
<reference key="4">
    <citation type="journal article" date="2007" name="Genome Res.">
        <title>Approaching a complete repository of sequence-verified protein-encoding clones for Saccharomyces cerevisiae.</title>
        <authorList>
            <person name="Hu Y."/>
            <person name="Rolfs A."/>
            <person name="Bhullar B."/>
            <person name="Murthy T.V.S."/>
            <person name="Zhu C."/>
            <person name="Berger M.F."/>
            <person name="Camargo A.A."/>
            <person name="Kelley F."/>
            <person name="McCarron S."/>
            <person name="Jepson D."/>
            <person name="Richardson A."/>
            <person name="Raphael J."/>
            <person name="Moreira D."/>
            <person name="Taycher E."/>
            <person name="Zuo D."/>
            <person name="Mohr S."/>
            <person name="Kane M.F."/>
            <person name="Williamson J."/>
            <person name="Simpson A.J.G."/>
            <person name="Bulyk M.L."/>
            <person name="Harlow E."/>
            <person name="Marsischky G."/>
            <person name="Kolodner R.D."/>
            <person name="LaBaer J."/>
        </authorList>
    </citation>
    <scope>NUCLEOTIDE SEQUENCE [GENOMIC DNA]</scope>
    <source>
        <strain>ATCC 204508 / S288c</strain>
    </source>
</reference>
<reference key="5">
    <citation type="journal article" date="1995" name="J. Biol. Chem.">
        <title>A proteolytic pathway that recognizes ubiquitin as a degradation signal.</title>
        <authorList>
            <person name="Johnson E.S."/>
            <person name="Ma P.C.M."/>
            <person name="Ota I.M."/>
            <person name="Varshavsky A."/>
        </authorList>
    </citation>
    <scope>CHARACTERIZATION</scope>
    <source>
        <strain>ATCC 204508 / S288c</strain>
    </source>
</reference>
<reference key="6">
    <citation type="journal article" date="1998" name="FEBS Lett.">
        <title>Son1p is a component of the 26S proteasome of the yeast Saccharomyces cerevisiae.</title>
        <authorList>
            <person name="Fujimuro M."/>
            <person name="Tanaka K."/>
            <person name="Yokosawa H."/>
            <person name="Toh-e A."/>
        </authorList>
    </citation>
    <scope>PRELIMINARY CHARACTERIZATION</scope>
</reference>
<reference key="7">
    <citation type="journal article" date="1999" name="FEBS Lett.">
        <title>Rpn4p acts as a transcription factor by binding to PACE, a nonamer box found upstream of 26S proteasomal and other genes in yeast.</title>
        <authorList>
            <person name="Mannhaupt G."/>
            <person name="Schnall R."/>
            <person name="Karpov V."/>
            <person name="Vetter I."/>
            <person name="Feldmann H."/>
        </authorList>
    </citation>
    <scope>FUNCTION</scope>
</reference>
<reference key="8">
    <citation type="journal article" date="2001" name="Proc. Natl. Acad. Sci. U.S.A.">
        <title>RPN4 is a ligand, substrate, and transcriptional regulator of the 26S proteasome: a negative feedback circuit.</title>
        <authorList>
            <person name="Xie Y."/>
            <person name="Varshavsky A."/>
        </authorList>
    </citation>
    <scope>FUNCTION</scope>
</reference>
<reference key="9">
    <citation type="journal article" date="2004" name="J. Biol. Chem.">
        <title>Rpn4 is a physiological substrate of the Ubr2 ubiquitin ligase.</title>
        <authorList>
            <person name="Wang L."/>
            <person name="Mao X."/>
            <person name="Ju D."/>
            <person name="Xie Y."/>
        </authorList>
    </citation>
    <scope>UBIQUITINATION</scope>
    <scope>INTERACTION WITH UBR2</scope>
</reference>
<reference key="10">
    <citation type="journal article" date="2008" name="Mol. Cell. Biol.">
        <title>Genome-wide analysis identifies MYND-domain protein Mub1 as an essential factor for Rpn4 ubiquitylation.</title>
        <authorList>
            <person name="Ju D."/>
            <person name="Wang X."/>
            <person name="Xu H."/>
            <person name="Xie Y."/>
        </authorList>
    </citation>
    <scope>UBIQUITINATION</scope>
    <scope>INTERACTION WITH MUB1</scope>
</reference>
<evidence type="ECO:0000255" key="1"/>
<evidence type="ECO:0000256" key="2">
    <source>
        <dbReference type="SAM" id="MobiDB-lite"/>
    </source>
</evidence>
<evidence type="ECO:0000269" key="3">
    <source>
    </source>
</evidence>
<evidence type="ECO:0000269" key="4">
    <source>
    </source>
</evidence>
<evidence type="ECO:0000269" key="5">
    <source>
    </source>
</evidence>
<evidence type="ECO:0000269" key="6">
    <source>
    </source>
</evidence>
<evidence type="ECO:0000269" key="7">
    <source>
    </source>
</evidence>
<evidence type="ECO:0000305" key="8"/>
<dbReference type="EMBL" id="L00928">
    <property type="protein sequence ID" value="AAA35067.1"/>
    <property type="molecule type" value="Genomic_DNA"/>
</dbReference>
<dbReference type="EMBL" id="Z48432">
    <property type="protein sequence ID" value="CAA88339.1"/>
    <property type="molecule type" value="Genomic_DNA"/>
</dbReference>
<dbReference type="EMBL" id="Z74068">
    <property type="protein sequence ID" value="CAA98579.1"/>
    <property type="molecule type" value="Genomic_DNA"/>
</dbReference>
<dbReference type="EMBL" id="AY723763">
    <property type="protein sequence ID" value="AAU09680.1"/>
    <property type="molecule type" value="Genomic_DNA"/>
</dbReference>
<dbReference type="EMBL" id="BK006938">
    <property type="protein sequence ID" value="DAA11830.1"/>
    <property type="molecule type" value="Genomic_DNA"/>
</dbReference>
<dbReference type="PIR" id="S41986">
    <property type="entry name" value="S41986"/>
</dbReference>
<dbReference type="RefSeq" id="NP_010264.3">
    <property type="nucleotide sequence ID" value="NM_001180079.3"/>
</dbReference>
<dbReference type="BioGRID" id="32035">
    <property type="interactions" value="798"/>
</dbReference>
<dbReference type="DIP" id="DIP-5779N"/>
<dbReference type="FunCoup" id="Q03465">
    <property type="interactions" value="5355"/>
</dbReference>
<dbReference type="IntAct" id="Q03465">
    <property type="interactions" value="5"/>
</dbReference>
<dbReference type="MINT" id="Q03465"/>
<dbReference type="STRING" id="4932.YDL020C"/>
<dbReference type="iPTMnet" id="Q03465"/>
<dbReference type="PaxDb" id="4932-YDL020C"/>
<dbReference type="PeptideAtlas" id="Q03465"/>
<dbReference type="EnsemblFungi" id="YDL020C_mRNA">
    <property type="protein sequence ID" value="YDL020C"/>
    <property type="gene ID" value="YDL020C"/>
</dbReference>
<dbReference type="GeneID" id="851542"/>
<dbReference type="KEGG" id="sce:YDL020C"/>
<dbReference type="AGR" id="SGD:S000002178"/>
<dbReference type="SGD" id="S000002178">
    <property type="gene designation" value="RPN4"/>
</dbReference>
<dbReference type="VEuPathDB" id="FungiDB:YDL020C"/>
<dbReference type="eggNOG" id="ENOG502RBAK">
    <property type="taxonomic scope" value="Eukaryota"/>
</dbReference>
<dbReference type="HOGENOM" id="CLU_038620_0_0_1"/>
<dbReference type="InParanoid" id="Q03465"/>
<dbReference type="OMA" id="KYADPSL"/>
<dbReference type="OrthoDB" id="7295497at2759"/>
<dbReference type="BioCyc" id="YEAST:G3O-29449-MONOMER"/>
<dbReference type="BioGRID-ORCS" id="851542">
    <property type="hits" value="0 hits in 13 CRISPR screens"/>
</dbReference>
<dbReference type="PRO" id="PR:Q03465"/>
<dbReference type="Proteomes" id="UP000002311">
    <property type="component" value="Chromosome IV"/>
</dbReference>
<dbReference type="RNAct" id="Q03465">
    <property type="molecule type" value="protein"/>
</dbReference>
<dbReference type="GO" id="GO:0005737">
    <property type="term" value="C:cytoplasm"/>
    <property type="evidence" value="ECO:0007005"/>
    <property type="project" value="SGD"/>
</dbReference>
<dbReference type="GO" id="GO:0005634">
    <property type="term" value="C:nucleus"/>
    <property type="evidence" value="ECO:0000314"/>
    <property type="project" value="SGD"/>
</dbReference>
<dbReference type="GO" id="GO:0001228">
    <property type="term" value="F:DNA-binding transcription activator activity, RNA polymerase II-specific"/>
    <property type="evidence" value="ECO:0000314"/>
    <property type="project" value="SGD"/>
</dbReference>
<dbReference type="GO" id="GO:0000978">
    <property type="term" value="F:RNA polymerase II cis-regulatory region sequence-specific DNA binding"/>
    <property type="evidence" value="ECO:0000314"/>
    <property type="project" value="SGD"/>
</dbReference>
<dbReference type="GO" id="GO:0071243">
    <property type="term" value="P:cellular response to arsenic-containing substance"/>
    <property type="evidence" value="ECO:0000315"/>
    <property type="project" value="SGD"/>
</dbReference>
<dbReference type="GO" id="GO:0033554">
    <property type="term" value="P:cellular response to stress"/>
    <property type="evidence" value="ECO:0000315"/>
    <property type="project" value="SGD"/>
</dbReference>
<dbReference type="GO" id="GO:0000122">
    <property type="term" value="P:negative regulation of transcription by RNA polymerase II"/>
    <property type="evidence" value="ECO:0000315"/>
    <property type="project" value="SGD"/>
</dbReference>
<dbReference type="GO" id="GO:0045944">
    <property type="term" value="P:positive regulation of transcription by RNA polymerase II"/>
    <property type="evidence" value="ECO:0000314"/>
    <property type="project" value="SGD"/>
</dbReference>
<dbReference type="GO" id="GO:0006282">
    <property type="term" value="P:regulation of DNA repair"/>
    <property type="evidence" value="ECO:0000315"/>
    <property type="project" value="SGD"/>
</dbReference>
<dbReference type="Gene3D" id="3.30.160.60">
    <property type="entry name" value="Classic Zinc Finger"/>
    <property type="match status" value="1"/>
</dbReference>
<dbReference type="InterPro" id="IPR051061">
    <property type="entry name" value="Zinc_finger_trans_reg"/>
</dbReference>
<dbReference type="InterPro" id="IPR013087">
    <property type="entry name" value="Znf_C2H2_type"/>
</dbReference>
<dbReference type="PANTHER" id="PTHR46179:SF19">
    <property type="entry name" value="C2H2 FINGER DOMAIN TRANSCRIPTION FACTOR (EUROFUNG)-RELATED"/>
    <property type="match status" value="1"/>
</dbReference>
<dbReference type="PANTHER" id="PTHR46179">
    <property type="entry name" value="ZINC FINGER PROTEIN"/>
    <property type="match status" value="1"/>
</dbReference>
<dbReference type="PROSITE" id="PS50157">
    <property type="entry name" value="ZINC_FINGER_C2H2_2"/>
    <property type="match status" value="1"/>
</dbReference>
<gene>
    <name type="primary">RPN4</name>
    <name type="synonym">SON1</name>
    <name type="synonym">UFD5</name>
    <name type="ordered locus">YDL020C</name>
    <name type="ORF">D2840</name>
</gene>